<keyword id="KW-0030">Aminoacyl-tRNA synthetase</keyword>
<keyword id="KW-0067">ATP-binding</keyword>
<keyword id="KW-0963">Cytoplasm</keyword>
<keyword id="KW-0436">Ligase</keyword>
<keyword id="KW-0547">Nucleotide-binding</keyword>
<keyword id="KW-0648">Protein biosynthesis</keyword>
<feature type="chain" id="PRO_1000019622" description="Serine--tRNA ligase">
    <location>
        <begin position="1"/>
        <end position="425"/>
    </location>
</feature>
<feature type="binding site" evidence="1">
    <location>
        <begin position="229"/>
        <end position="231"/>
    </location>
    <ligand>
        <name>L-serine</name>
        <dbReference type="ChEBI" id="CHEBI:33384"/>
    </ligand>
</feature>
<feature type="binding site" evidence="1">
    <location>
        <begin position="259"/>
        <end position="261"/>
    </location>
    <ligand>
        <name>ATP</name>
        <dbReference type="ChEBI" id="CHEBI:30616"/>
    </ligand>
</feature>
<feature type="binding site" evidence="1">
    <location>
        <position position="275"/>
    </location>
    <ligand>
        <name>ATP</name>
        <dbReference type="ChEBI" id="CHEBI:30616"/>
    </ligand>
</feature>
<feature type="binding site" evidence="1">
    <location>
        <position position="282"/>
    </location>
    <ligand>
        <name>L-serine</name>
        <dbReference type="ChEBI" id="CHEBI:33384"/>
    </ligand>
</feature>
<feature type="binding site" evidence="1">
    <location>
        <begin position="349"/>
        <end position="352"/>
    </location>
    <ligand>
        <name>ATP</name>
        <dbReference type="ChEBI" id="CHEBI:30616"/>
    </ligand>
</feature>
<feature type="binding site" evidence="1">
    <location>
        <position position="384"/>
    </location>
    <ligand>
        <name>L-serine</name>
        <dbReference type="ChEBI" id="CHEBI:33384"/>
    </ligand>
</feature>
<organism>
    <name type="scientific">Borreliella afzelii (strain PKo)</name>
    <name type="common">Borrelia afzelii</name>
    <dbReference type="NCBI Taxonomy" id="390236"/>
    <lineage>
        <taxon>Bacteria</taxon>
        <taxon>Pseudomonadati</taxon>
        <taxon>Spirochaetota</taxon>
        <taxon>Spirochaetia</taxon>
        <taxon>Spirochaetales</taxon>
        <taxon>Borreliaceae</taxon>
        <taxon>Borreliella</taxon>
    </lineage>
</organism>
<name>SYS_BORAP</name>
<proteinExistence type="inferred from homology"/>
<protein>
    <recommendedName>
        <fullName evidence="1">Serine--tRNA ligase</fullName>
        <ecNumber evidence="1">6.1.1.11</ecNumber>
    </recommendedName>
    <alternativeName>
        <fullName evidence="1">Seryl-tRNA synthetase</fullName>
        <shortName evidence="1">SerRS</shortName>
    </alternativeName>
    <alternativeName>
        <fullName evidence="1">Seryl-tRNA(Ser/Sec) synthetase</fullName>
    </alternativeName>
</protein>
<evidence type="ECO:0000255" key="1">
    <source>
        <dbReference type="HAMAP-Rule" id="MF_00176"/>
    </source>
</evidence>
<sequence length="425" mass="48948">MLDLKFIRDNLDLVKRSIKARGLVLDIDKLIYLDDKRKKIITKIGELNAKRNENSSKMRENLDKVLKISLIETGKILKKQLIDLEEELERVSFDFDLENKRVPNILSPDVPIGNSEEDNFEIKKVGIIPRFDFKPKDHLELGRDLDLLDFDRAREVSGSKFYYLKNEAVFLEIALINFSLNKLREKGFNVFITPDVAREFIVDGIGFNPRGNESNIYKIEDTDKYLVGTSEITLGGYYYNKIIDLTLPIKMAGFSHCFRKEAGAYGQLSKGLYRVHQFSKVEMFCFCKAEESSIIHDEFLSIQEQIFTELEIPYRVLNICSFDLGSPAYKKYDIEAWMPGRDGKGGYGEITSTSNCTDYQSRRLKIRYKDQDGQNKFAHMVNGTAIATTRVIISILENFQDEKGGVKIPKSLVKYTGFDYIPFKN</sequence>
<comment type="function">
    <text evidence="1">Catalyzes the attachment of serine to tRNA(Ser). Is also able to aminoacylate tRNA(Sec) with serine, to form the misacylated tRNA L-seryl-tRNA(Sec), which will be further converted into selenocysteinyl-tRNA(Sec).</text>
</comment>
<comment type="catalytic activity">
    <reaction evidence="1">
        <text>tRNA(Ser) + L-serine + ATP = L-seryl-tRNA(Ser) + AMP + diphosphate + H(+)</text>
        <dbReference type="Rhea" id="RHEA:12292"/>
        <dbReference type="Rhea" id="RHEA-COMP:9669"/>
        <dbReference type="Rhea" id="RHEA-COMP:9703"/>
        <dbReference type="ChEBI" id="CHEBI:15378"/>
        <dbReference type="ChEBI" id="CHEBI:30616"/>
        <dbReference type="ChEBI" id="CHEBI:33019"/>
        <dbReference type="ChEBI" id="CHEBI:33384"/>
        <dbReference type="ChEBI" id="CHEBI:78442"/>
        <dbReference type="ChEBI" id="CHEBI:78533"/>
        <dbReference type="ChEBI" id="CHEBI:456215"/>
        <dbReference type="EC" id="6.1.1.11"/>
    </reaction>
</comment>
<comment type="catalytic activity">
    <reaction evidence="1">
        <text>tRNA(Sec) + L-serine + ATP = L-seryl-tRNA(Sec) + AMP + diphosphate + H(+)</text>
        <dbReference type="Rhea" id="RHEA:42580"/>
        <dbReference type="Rhea" id="RHEA-COMP:9742"/>
        <dbReference type="Rhea" id="RHEA-COMP:10128"/>
        <dbReference type="ChEBI" id="CHEBI:15378"/>
        <dbReference type="ChEBI" id="CHEBI:30616"/>
        <dbReference type="ChEBI" id="CHEBI:33019"/>
        <dbReference type="ChEBI" id="CHEBI:33384"/>
        <dbReference type="ChEBI" id="CHEBI:78442"/>
        <dbReference type="ChEBI" id="CHEBI:78533"/>
        <dbReference type="ChEBI" id="CHEBI:456215"/>
        <dbReference type="EC" id="6.1.1.11"/>
    </reaction>
</comment>
<comment type="pathway">
    <text evidence="1">Aminoacyl-tRNA biosynthesis; selenocysteinyl-tRNA(Sec) biosynthesis; L-seryl-tRNA(Sec) from L-serine and tRNA(Sec): step 1/1.</text>
</comment>
<comment type="subunit">
    <text evidence="1">Homodimer. The tRNA molecule binds across the dimer.</text>
</comment>
<comment type="subcellular location">
    <subcellularLocation>
        <location evidence="1">Cytoplasm</location>
    </subcellularLocation>
</comment>
<comment type="domain">
    <text evidence="1">Consists of two distinct domains, a catalytic core and a N-terminal extension that is involved in tRNA binding.</text>
</comment>
<comment type="similarity">
    <text evidence="1">Belongs to the class-II aminoacyl-tRNA synthetase family. Type-1 seryl-tRNA synthetase subfamily.</text>
</comment>
<accession>Q0SNT6</accession>
<accession>G0IR69</accession>
<dbReference type="EC" id="6.1.1.11" evidence="1"/>
<dbReference type="EMBL" id="CP000395">
    <property type="protein sequence ID" value="ABH01492.1"/>
    <property type="molecule type" value="Genomic_DNA"/>
</dbReference>
<dbReference type="EMBL" id="CP002933">
    <property type="protein sequence ID" value="AEL69455.1"/>
    <property type="molecule type" value="Genomic_DNA"/>
</dbReference>
<dbReference type="RefSeq" id="WP_011600902.1">
    <property type="nucleotide sequence ID" value="NC_008277.1"/>
</dbReference>
<dbReference type="SMR" id="Q0SNT6"/>
<dbReference type="STRING" id="29518.BLA32_03175"/>
<dbReference type="KEGG" id="baf:BAPKO_0234"/>
<dbReference type="KEGG" id="bafz:BafPKo_0228"/>
<dbReference type="PATRIC" id="fig|390236.22.peg.222"/>
<dbReference type="eggNOG" id="COG0172">
    <property type="taxonomic scope" value="Bacteria"/>
</dbReference>
<dbReference type="HOGENOM" id="CLU_023797_0_1_12"/>
<dbReference type="OrthoDB" id="9804647at2"/>
<dbReference type="UniPathway" id="UPA00906">
    <property type="reaction ID" value="UER00895"/>
</dbReference>
<dbReference type="Proteomes" id="UP000005216">
    <property type="component" value="Chromosome"/>
</dbReference>
<dbReference type="GO" id="GO:0005737">
    <property type="term" value="C:cytoplasm"/>
    <property type="evidence" value="ECO:0007669"/>
    <property type="project" value="UniProtKB-SubCell"/>
</dbReference>
<dbReference type="GO" id="GO:0005524">
    <property type="term" value="F:ATP binding"/>
    <property type="evidence" value="ECO:0007669"/>
    <property type="project" value="UniProtKB-UniRule"/>
</dbReference>
<dbReference type="GO" id="GO:0004828">
    <property type="term" value="F:serine-tRNA ligase activity"/>
    <property type="evidence" value="ECO:0007669"/>
    <property type="project" value="UniProtKB-UniRule"/>
</dbReference>
<dbReference type="GO" id="GO:0016260">
    <property type="term" value="P:selenocysteine biosynthetic process"/>
    <property type="evidence" value="ECO:0007669"/>
    <property type="project" value="UniProtKB-UniRule"/>
</dbReference>
<dbReference type="GO" id="GO:0006434">
    <property type="term" value="P:seryl-tRNA aminoacylation"/>
    <property type="evidence" value="ECO:0007669"/>
    <property type="project" value="UniProtKB-UniRule"/>
</dbReference>
<dbReference type="CDD" id="cd00770">
    <property type="entry name" value="SerRS_core"/>
    <property type="match status" value="1"/>
</dbReference>
<dbReference type="FunFam" id="3.30.930.10:FF:000055">
    <property type="entry name" value="Serine--tRNA ligase"/>
    <property type="match status" value="1"/>
</dbReference>
<dbReference type="Gene3D" id="3.30.930.10">
    <property type="entry name" value="Bira Bifunctional Protein, Domain 2"/>
    <property type="match status" value="1"/>
</dbReference>
<dbReference type="Gene3D" id="1.10.287.40">
    <property type="entry name" value="Serine-tRNA synthetase, tRNA binding domain"/>
    <property type="match status" value="1"/>
</dbReference>
<dbReference type="HAMAP" id="MF_00176">
    <property type="entry name" value="Ser_tRNA_synth_type1"/>
    <property type="match status" value="1"/>
</dbReference>
<dbReference type="InterPro" id="IPR002314">
    <property type="entry name" value="aa-tRNA-synt_IIb"/>
</dbReference>
<dbReference type="InterPro" id="IPR006195">
    <property type="entry name" value="aa-tRNA-synth_II"/>
</dbReference>
<dbReference type="InterPro" id="IPR045864">
    <property type="entry name" value="aa-tRNA-synth_II/BPL/LPL"/>
</dbReference>
<dbReference type="InterPro" id="IPR002317">
    <property type="entry name" value="Ser-tRNA-ligase_type_1"/>
</dbReference>
<dbReference type="InterPro" id="IPR015866">
    <property type="entry name" value="Ser-tRNA-synth_1_N"/>
</dbReference>
<dbReference type="InterPro" id="IPR042103">
    <property type="entry name" value="SerRS_1_N_sf"/>
</dbReference>
<dbReference type="InterPro" id="IPR033729">
    <property type="entry name" value="SerRS_core"/>
</dbReference>
<dbReference type="InterPro" id="IPR010978">
    <property type="entry name" value="tRNA-bd_arm"/>
</dbReference>
<dbReference type="NCBIfam" id="TIGR00414">
    <property type="entry name" value="serS"/>
    <property type="match status" value="1"/>
</dbReference>
<dbReference type="PANTHER" id="PTHR11778">
    <property type="entry name" value="SERYL-TRNA SYNTHETASE"/>
    <property type="match status" value="1"/>
</dbReference>
<dbReference type="Pfam" id="PF02403">
    <property type="entry name" value="Seryl_tRNA_N"/>
    <property type="match status" value="1"/>
</dbReference>
<dbReference type="Pfam" id="PF00587">
    <property type="entry name" value="tRNA-synt_2b"/>
    <property type="match status" value="1"/>
</dbReference>
<dbReference type="PIRSF" id="PIRSF001529">
    <property type="entry name" value="Ser-tRNA-synth_IIa"/>
    <property type="match status" value="1"/>
</dbReference>
<dbReference type="PRINTS" id="PR00981">
    <property type="entry name" value="TRNASYNTHSER"/>
</dbReference>
<dbReference type="SUPFAM" id="SSF55681">
    <property type="entry name" value="Class II aaRS and biotin synthetases"/>
    <property type="match status" value="1"/>
</dbReference>
<dbReference type="SUPFAM" id="SSF46589">
    <property type="entry name" value="tRNA-binding arm"/>
    <property type="match status" value="1"/>
</dbReference>
<dbReference type="PROSITE" id="PS50862">
    <property type="entry name" value="AA_TRNA_LIGASE_II"/>
    <property type="match status" value="1"/>
</dbReference>
<gene>
    <name evidence="1" type="primary">serS</name>
    <name type="ordered locus">BAPKO_0234</name>
    <name type="ordered locus">BafPKo_0228</name>
</gene>
<reference key="1">
    <citation type="journal article" date="2006" name="BMC Genomics">
        <title>Comparative genome analysis: selection pressure on the Borrelia vls cassettes is essential for infectivity.</title>
        <authorList>
            <person name="Gloeckner G."/>
            <person name="Schulte-Spechtel U."/>
            <person name="Schilhabel M."/>
            <person name="Felder M."/>
            <person name="Suehnel J."/>
            <person name="Wilske B."/>
            <person name="Platzer M."/>
        </authorList>
    </citation>
    <scope>NUCLEOTIDE SEQUENCE [LARGE SCALE GENOMIC DNA]</scope>
    <source>
        <strain>PKo</strain>
    </source>
</reference>
<reference key="2">
    <citation type="journal article" date="2011" name="J. Bacteriol.">
        <title>Whole-genome sequences of two Borrelia afzelii and two Borrelia garinii Lyme disease agent isolates.</title>
        <authorList>
            <person name="Casjens S.R."/>
            <person name="Mongodin E.F."/>
            <person name="Qiu W.G."/>
            <person name="Dunn J.J."/>
            <person name="Luft B.J."/>
            <person name="Fraser-Liggett C.M."/>
            <person name="Schutzer S.E."/>
        </authorList>
    </citation>
    <scope>NUCLEOTIDE SEQUENCE [LARGE SCALE GENOMIC DNA]</scope>
    <source>
        <strain>PKo</strain>
    </source>
</reference>